<proteinExistence type="evidence at protein level"/>
<keyword id="KW-1185">Reference proteome</keyword>
<keyword id="KW-0808">Transferase</keyword>
<organism>
    <name type="scientific">Mycobacterium tuberculosis (strain ATCC 25618 / H37Rv)</name>
    <dbReference type="NCBI Taxonomy" id="83332"/>
    <lineage>
        <taxon>Bacteria</taxon>
        <taxon>Bacillati</taxon>
        <taxon>Actinomycetota</taxon>
        <taxon>Actinomycetes</taxon>
        <taxon>Mycobacteriales</taxon>
        <taxon>Mycobacteriaceae</taxon>
        <taxon>Mycobacterium</taxon>
        <taxon>Mycobacterium tuberculosis complex</taxon>
    </lineage>
</organism>
<evidence type="ECO:0000250" key="1"/>
<evidence type="ECO:0000255" key="2"/>
<evidence type="ECO:0000305" key="3"/>
<gene>
    <name type="primary">scoA</name>
    <name type="ordered locus">Rv2504c</name>
    <name type="ORF">MTCY07A7.10c</name>
</gene>
<sequence length="248" mass="26276">MDKVVATAAEAVADIANGSSLAVGGFGLCGIPEALIAALVDSGVTDLETVSNNCGIDGVGLGLLLQHKRIRRTVSSYVGENKEFARQFLAGELEVELTPQGTLAERLRAGGMGIPAFYTPAGVGTQVADGGLPWRYDASGGVAVVSPAKETREFDGVTYVLERGIRTDFALVHAWQGDRHGNLMYRHAAANFNPECASAGRITIAEVEHLVEPGEIDPATVHTPGVFVHRVVHVPNPAKKIERETVRQ</sequence>
<dbReference type="EC" id="2.8.3.5"/>
<dbReference type="EMBL" id="AL123456">
    <property type="protein sequence ID" value="CCP45298.1"/>
    <property type="molecule type" value="Genomic_DNA"/>
</dbReference>
<dbReference type="PIR" id="H70550">
    <property type="entry name" value="H70550"/>
</dbReference>
<dbReference type="RefSeq" id="NP_217020.1">
    <property type="nucleotide sequence ID" value="NC_000962.3"/>
</dbReference>
<dbReference type="RefSeq" id="WP_003412786.1">
    <property type="nucleotide sequence ID" value="NZ_NVQJ01000063.1"/>
</dbReference>
<dbReference type="SMR" id="P9WPW5"/>
<dbReference type="FunCoup" id="P9WPW5">
    <property type="interactions" value="82"/>
</dbReference>
<dbReference type="STRING" id="83332.Rv2504c"/>
<dbReference type="PaxDb" id="83332-Rv2504c"/>
<dbReference type="DNASU" id="888503"/>
<dbReference type="GeneID" id="888503"/>
<dbReference type="KEGG" id="mtu:Rv2504c"/>
<dbReference type="KEGG" id="mtv:RVBD_2504c"/>
<dbReference type="TubercuList" id="Rv2504c"/>
<dbReference type="eggNOG" id="COG1788">
    <property type="taxonomic scope" value="Bacteria"/>
</dbReference>
<dbReference type="InParanoid" id="P9WPW5"/>
<dbReference type="OrthoDB" id="3369756at2"/>
<dbReference type="PhylomeDB" id="P9WPW5"/>
<dbReference type="Proteomes" id="UP000001584">
    <property type="component" value="Chromosome"/>
</dbReference>
<dbReference type="GO" id="GO:0008260">
    <property type="term" value="F:succinyl-CoA:3-oxo-acid CoA-transferase activity"/>
    <property type="evidence" value="ECO:0007669"/>
    <property type="project" value="UniProtKB-EC"/>
</dbReference>
<dbReference type="Gene3D" id="3.40.1080.10">
    <property type="entry name" value="Glutaconate Coenzyme A-transferase"/>
    <property type="match status" value="1"/>
</dbReference>
<dbReference type="InterPro" id="IPR012792">
    <property type="entry name" value="3-oxoacid_CoA-transf_A"/>
</dbReference>
<dbReference type="InterPro" id="IPR004165">
    <property type="entry name" value="CoA_trans_fam_I"/>
</dbReference>
<dbReference type="InterPro" id="IPR004163">
    <property type="entry name" value="CoA_transf_BS"/>
</dbReference>
<dbReference type="InterPro" id="IPR037171">
    <property type="entry name" value="NagB/RpiA_transferase-like"/>
</dbReference>
<dbReference type="NCBIfam" id="TIGR02429">
    <property type="entry name" value="pcaI_scoA_fam"/>
    <property type="match status" value="1"/>
</dbReference>
<dbReference type="PANTHER" id="PTHR13707:SF60">
    <property type="entry name" value="ACETATE COA-TRANSFERASE SUBUNIT ALPHA"/>
    <property type="match status" value="1"/>
</dbReference>
<dbReference type="PANTHER" id="PTHR13707">
    <property type="entry name" value="KETOACID-COENZYME A TRANSFERASE"/>
    <property type="match status" value="1"/>
</dbReference>
<dbReference type="Pfam" id="PF01144">
    <property type="entry name" value="CoA_trans"/>
    <property type="match status" value="1"/>
</dbReference>
<dbReference type="SMART" id="SM00882">
    <property type="entry name" value="CoA_trans"/>
    <property type="match status" value="1"/>
</dbReference>
<dbReference type="SUPFAM" id="SSF100950">
    <property type="entry name" value="NagB/RpiA/CoA transferase-like"/>
    <property type="match status" value="1"/>
</dbReference>
<dbReference type="PROSITE" id="PS01273">
    <property type="entry name" value="COA_TRANSF_1"/>
    <property type="match status" value="1"/>
</dbReference>
<name>SCOA_MYCTU</name>
<comment type="catalytic activity">
    <reaction>
        <text>a 3-oxo acid + succinyl-CoA = a 3-oxoacyl-CoA + succinate</text>
        <dbReference type="Rhea" id="RHEA:24564"/>
        <dbReference type="ChEBI" id="CHEBI:30031"/>
        <dbReference type="ChEBI" id="CHEBI:35973"/>
        <dbReference type="ChEBI" id="CHEBI:57292"/>
        <dbReference type="ChEBI" id="CHEBI:90726"/>
        <dbReference type="EC" id="2.8.3.5"/>
    </reaction>
</comment>
<comment type="subunit">
    <text evidence="1">Heterodimer of a subunit A and a subunit B.</text>
</comment>
<comment type="similarity">
    <text evidence="3">Belongs to the 3-oxoacid CoA-transferase subunit A family.</text>
</comment>
<reference key="1">
    <citation type="journal article" date="1998" name="Nature">
        <title>Deciphering the biology of Mycobacterium tuberculosis from the complete genome sequence.</title>
        <authorList>
            <person name="Cole S.T."/>
            <person name="Brosch R."/>
            <person name="Parkhill J."/>
            <person name="Garnier T."/>
            <person name="Churcher C.M."/>
            <person name="Harris D.E."/>
            <person name="Gordon S.V."/>
            <person name="Eiglmeier K."/>
            <person name="Gas S."/>
            <person name="Barry C.E. III"/>
            <person name="Tekaia F."/>
            <person name="Badcock K."/>
            <person name="Basham D."/>
            <person name="Brown D."/>
            <person name="Chillingworth T."/>
            <person name="Connor R."/>
            <person name="Davies R.M."/>
            <person name="Devlin K."/>
            <person name="Feltwell T."/>
            <person name="Gentles S."/>
            <person name="Hamlin N."/>
            <person name="Holroyd S."/>
            <person name="Hornsby T."/>
            <person name="Jagels K."/>
            <person name="Krogh A."/>
            <person name="McLean J."/>
            <person name="Moule S."/>
            <person name="Murphy L.D."/>
            <person name="Oliver S."/>
            <person name="Osborne J."/>
            <person name="Quail M.A."/>
            <person name="Rajandream M.A."/>
            <person name="Rogers J."/>
            <person name="Rutter S."/>
            <person name="Seeger K."/>
            <person name="Skelton S."/>
            <person name="Squares S."/>
            <person name="Squares R."/>
            <person name="Sulston J.E."/>
            <person name="Taylor K."/>
            <person name="Whitehead S."/>
            <person name="Barrell B.G."/>
        </authorList>
    </citation>
    <scope>NUCLEOTIDE SEQUENCE [LARGE SCALE GENOMIC DNA]</scope>
    <source>
        <strain>ATCC 25618 / H37Rv</strain>
    </source>
</reference>
<reference key="2">
    <citation type="journal article" date="2011" name="Mol. Cell. Proteomics">
        <title>Proteogenomic analysis of Mycobacterium tuberculosis by high resolution mass spectrometry.</title>
        <authorList>
            <person name="Kelkar D.S."/>
            <person name="Kumar D."/>
            <person name="Kumar P."/>
            <person name="Balakrishnan L."/>
            <person name="Muthusamy B."/>
            <person name="Yadav A.K."/>
            <person name="Shrivastava P."/>
            <person name="Marimuthu A."/>
            <person name="Anand S."/>
            <person name="Sundaram H."/>
            <person name="Kingsbury R."/>
            <person name="Harsha H.C."/>
            <person name="Nair B."/>
            <person name="Prasad T.S."/>
            <person name="Chauhan D.S."/>
            <person name="Katoch K."/>
            <person name="Katoch V.M."/>
            <person name="Kumar P."/>
            <person name="Chaerkady R."/>
            <person name="Ramachandran S."/>
            <person name="Dash D."/>
            <person name="Pandey A."/>
        </authorList>
    </citation>
    <scope>IDENTIFICATION BY MASS SPECTROMETRY [LARGE SCALE ANALYSIS]</scope>
    <source>
        <strain>ATCC 25618 / H37Rv</strain>
    </source>
</reference>
<accession>P9WPW5</accession>
<accession>L0TCJ8</accession>
<accession>O06167</accession>
<accession>P63648</accession>
<protein>
    <recommendedName>
        <fullName>Probable succinyl-CoA:3-ketoacid coenzyme A transferase subunit A</fullName>
        <ecNumber>2.8.3.5</ecNumber>
    </recommendedName>
    <alternativeName>
        <fullName>Succinyl-CoA:3-oxoacid CoA-transferase</fullName>
        <shortName>OXCT A</shortName>
    </alternativeName>
</protein>
<feature type="chain" id="PRO_0000157911" description="Probable succinyl-CoA:3-ketoacid coenzyme A transferase subunit A">
    <location>
        <begin position="1"/>
        <end position="248"/>
    </location>
</feature>
<feature type="binding site" evidence="2">
    <location>
        <begin position="24"/>
        <end position="30"/>
    </location>
    <ligand>
        <name>CoA</name>
        <dbReference type="ChEBI" id="CHEBI:57287"/>
    </ligand>
</feature>